<comment type="function">
    <text evidence="2">With S4 and S5 plays an important role in translational accuracy.</text>
</comment>
<comment type="function">
    <text evidence="2">Interacts with and stabilizes bases of the 16S rRNA that are involved in tRNA selection in the A site and with the mRNA backbone. Located at the interface of the 30S and 50S subunits, it traverses the body of the 30S subunit contacting proteins on the other side and probably holding the rRNA structure together. The combined cluster of proteins S8, S12 and S17 appears to hold together the shoulder and platform of the 30S subunit.</text>
</comment>
<comment type="subunit">
    <text evidence="2">Part of the 30S ribosomal subunit. Contacts proteins S8 and S17. May interact with IF1 in the 30S initiation complex.</text>
</comment>
<comment type="similarity">
    <text evidence="2">Belongs to the universal ribosomal protein uS12 family.</text>
</comment>
<reference key="1">
    <citation type="submission" date="2007-04" db="EMBL/GenBank/DDBJ databases">
        <title>Complete sequence of chromosome of Rhodobacter sphaeroides ATCC 17025.</title>
        <authorList>
            <consortium name="US DOE Joint Genome Institute"/>
            <person name="Copeland A."/>
            <person name="Lucas S."/>
            <person name="Lapidus A."/>
            <person name="Barry K."/>
            <person name="Detter J.C."/>
            <person name="Glavina del Rio T."/>
            <person name="Hammon N."/>
            <person name="Israni S."/>
            <person name="Dalin E."/>
            <person name="Tice H."/>
            <person name="Pitluck S."/>
            <person name="Chertkov O."/>
            <person name="Brettin T."/>
            <person name="Bruce D."/>
            <person name="Han C."/>
            <person name="Schmutz J."/>
            <person name="Larimer F."/>
            <person name="Land M."/>
            <person name="Hauser L."/>
            <person name="Kyrpides N."/>
            <person name="Kim E."/>
            <person name="Richardson P."/>
            <person name="Mackenzie C."/>
            <person name="Choudhary M."/>
            <person name="Donohue T.J."/>
            <person name="Kaplan S."/>
        </authorList>
    </citation>
    <scope>NUCLEOTIDE SEQUENCE [LARGE SCALE GENOMIC DNA]</scope>
    <source>
        <strain>ATCC 17025 / ATH 2.4.3</strain>
    </source>
</reference>
<name>RS12_CERS5</name>
<evidence type="ECO:0000250" key="1"/>
<evidence type="ECO:0000255" key="2">
    <source>
        <dbReference type="HAMAP-Rule" id="MF_00403"/>
    </source>
</evidence>
<evidence type="ECO:0000256" key="3">
    <source>
        <dbReference type="SAM" id="MobiDB-lite"/>
    </source>
</evidence>
<evidence type="ECO:0000305" key="4"/>
<protein>
    <recommendedName>
        <fullName evidence="2">Small ribosomal subunit protein uS12</fullName>
    </recommendedName>
    <alternativeName>
        <fullName evidence="4">30S ribosomal protein S12</fullName>
    </alternativeName>
</protein>
<keyword id="KW-0488">Methylation</keyword>
<keyword id="KW-0687">Ribonucleoprotein</keyword>
<keyword id="KW-0689">Ribosomal protein</keyword>
<keyword id="KW-0694">RNA-binding</keyword>
<keyword id="KW-0699">rRNA-binding</keyword>
<keyword id="KW-0820">tRNA-binding</keyword>
<dbReference type="EMBL" id="CP000661">
    <property type="protein sequence ID" value="ABP71427.1"/>
    <property type="molecule type" value="Genomic_DNA"/>
</dbReference>
<dbReference type="SMR" id="A4WVL3"/>
<dbReference type="STRING" id="349102.Rsph17025_2539"/>
<dbReference type="KEGG" id="rsq:Rsph17025_2539"/>
<dbReference type="eggNOG" id="COG0048">
    <property type="taxonomic scope" value="Bacteria"/>
</dbReference>
<dbReference type="HOGENOM" id="CLU_104295_1_2_5"/>
<dbReference type="BioCyc" id="RSPH349102:G1G8M-2617-MONOMER"/>
<dbReference type="GO" id="GO:0015935">
    <property type="term" value="C:small ribosomal subunit"/>
    <property type="evidence" value="ECO:0007669"/>
    <property type="project" value="InterPro"/>
</dbReference>
<dbReference type="GO" id="GO:0019843">
    <property type="term" value="F:rRNA binding"/>
    <property type="evidence" value="ECO:0007669"/>
    <property type="project" value="UniProtKB-UniRule"/>
</dbReference>
<dbReference type="GO" id="GO:0003735">
    <property type="term" value="F:structural constituent of ribosome"/>
    <property type="evidence" value="ECO:0007669"/>
    <property type="project" value="InterPro"/>
</dbReference>
<dbReference type="GO" id="GO:0000049">
    <property type="term" value="F:tRNA binding"/>
    <property type="evidence" value="ECO:0007669"/>
    <property type="project" value="UniProtKB-UniRule"/>
</dbReference>
<dbReference type="GO" id="GO:0006412">
    <property type="term" value="P:translation"/>
    <property type="evidence" value="ECO:0007669"/>
    <property type="project" value="UniProtKB-UniRule"/>
</dbReference>
<dbReference type="CDD" id="cd03368">
    <property type="entry name" value="Ribosomal_S12"/>
    <property type="match status" value="1"/>
</dbReference>
<dbReference type="FunFam" id="2.40.50.140:FF:000001">
    <property type="entry name" value="30S ribosomal protein S12"/>
    <property type="match status" value="1"/>
</dbReference>
<dbReference type="Gene3D" id="2.40.50.140">
    <property type="entry name" value="Nucleic acid-binding proteins"/>
    <property type="match status" value="1"/>
</dbReference>
<dbReference type="HAMAP" id="MF_00403_B">
    <property type="entry name" value="Ribosomal_uS12_B"/>
    <property type="match status" value="1"/>
</dbReference>
<dbReference type="InterPro" id="IPR012340">
    <property type="entry name" value="NA-bd_OB-fold"/>
</dbReference>
<dbReference type="InterPro" id="IPR006032">
    <property type="entry name" value="Ribosomal_uS12"/>
</dbReference>
<dbReference type="InterPro" id="IPR005679">
    <property type="entry name" value="Ribosomal_uS12_bac"/>
</dbReference>
<dbReference type="NCBIfam" id="TIGR00981">
    <property type="entry name" value="rpsL_bact"/>
    <property type="match status" value="1"/>
</dbReference>
<dbReference type="PANTHER" id="PTHR11652">
    <property type="entry name" value="30S RIBOSOMAL PROTEIN S12 FAMILY MEMBER"/>
    <property type="match status" value="1"/>
</dbReference>
<dbReference type="Pfam" id="PF00164">
    <property type="entry name" value="Ribosom_S12_S23"/>
    <property type="match status" value="1"/>
</dbReference>
<dbReference type="PIRSF" id="PIRSF002133">
    <property type="entry name" value="Ribosomal_S12/S23"/>
    <property type="match status" value="1"/>
</dbReference>
<dbReference type="PRINTS" id="PR01034">
    <property type="entry name" value="RIBOSOMALS12"/>
</dbReference>
<dbReference type="SUPFAM" id="SSF50249">
    <property type="entry name" value="Nucleic acid-binding proteins"/>
    <property type="match status" value="1"/>
</dbReference>
<dbReference type="PROSITE" id="PS00055">
    <property type="entry name" value="RIBOSOMAL_S12"/>
    <property type="match status" value="1"/>
</dbReference>
<sequence>MPTIQQLIRKPREPKRVRSKSQHLESCPQKRGVCTRVYTTTPKKPNSAMRKVAKVRLTNGFEVISYIPGEKHNLQEHSVVLIRGGRVKDLPGVRYHILRGVLDTQGVKDRRQRRSKYGAKRPK</sequence>
<gene>
    <name evidence="2" type="primary">rpsL</name>
    <name type="ordered locus">Rsph17025_2539</name>
</gene>
<organism>
    <name type="scientific">Cereibacter sphaeroides (strain ATCC 17025 / ATH 2.4.3)</name>
    <name type="common">Rhodobacter sphaeroides</name>
    <dbReference type="NCBI Taxonomy" id="349102"/>
    <lineage>
        <taxon>Bacteria</taxon>
        <taxon>Pseudomonadati</taxon>
        <taxon>Pseudomonadota</taxon>
        <taxon>Alphaproteobacteria</taxon>
        <taxon>Rhodobacterales</taxon>
        <taxon>Paracoccaceae</taxon>
        <taxon>Cereibacter</taxon>
    </lineage>
</organism>
<feature type="chain" id="PRO_1000049804" description="Small ribosomal subunit protein uS12">
    <location>
        <begin position="1"/>
        <end position="123"/>
    </location>
</feature>
<feature type="region of interest" description="Disordered" evidence="3">
    <location>
        <begin position="1"/>
        <end position="28"/>
    </location>
</feature>
<feature type="modified residue" description="3-methylthioaspartic acid" evidence="1">
    <location>
        <position position="89"/>
    </location>
</feature>
<accession>A4WVL3</accession>
<proteinExistence type="inferred from homology"/>